<proteinExistence type="evidence at protein level"/>
<protein>
    <recommendedName>
        <fullName>Protein piccolo</fullName>
    </recommendedName>
    <alternativeName>
        <fullName>Aczonin</fullName>
    </alternativeName>
    <alternativeName>
        <fullName>Multidomain presynaptic cytomatrix protein</fullName>
    </alternativeName>
</protein>
<accession>Q9JKS6</accession>
<accession>Q9JLT1</accession>
<keyword id="KW-0002">3D-structure</keyword>
<keyword id="KW-0025">Alternative splicing</keyword>
<keyword id="KW-0106">Calcium</keyword>
<keyword id="KW-0111">Calcium/phospholipid-binding</keyword>
<keyword id="KW-0966">Cell projection</keyword>
<keyword id="KW-0325">Glycoprotein</keyword>
<keyword id="KW-0479">Metal-binding</keyword>
<keyword id="KW-0597">Phosphoprotein</keyword>
<keyword id="KW-1185">Reference proteome</keyword>
<keyword id="KW-0677">Repeat</keyword>
<keyword id="KW-0770">Synapse</keyword>
<keyword id="KW-0862">Zinc</keyword>
<keyword id="KW-0863">Zinc-finger</keyword>
<evidence type="ECO:0000250" key="1"/>
<evidence type="ECO:0000250" key="2">
    <source>
        <dbReference type="UniProtKB" id="Q9QYX7"/>
    </source>
</evidence>
<evidence type="ECO:0000255" key="3"/>
<evidence type="ECO:0000255" key="4">
    <source>
        <dbReference type="PROSITE-ProRule" id="PRU00041"/>
    </source>
</evidence>
<evidence type="ECO:0000255" key="5">
    <source>
        <dbReference type="PROSITE-ProRule" id="PRU00143"/>
    </source>
</evidence>
<evidence type="ECO:0000256" key="6">
    <source>
        <dbReference type="SAM" id="MobiDB-lite"/>
    </source>
</evidence>
<evidence type="ECO:0000269" key="7">
    <source>
    </source>
</evidence>
<evidence type="ECO:0000269" key="8">
    <source>
    </source>
</evidence>
<evidence type="ECO:0000269" key="9">
    <source>
    </source>
</evidence>
<evidence type="ECO:0000269" key="10">
    <source>
    </source>
</evidence>
<evidence type="ECO:0000269" key="11">
    <source>
    </source>
</evidence>
<evidence type="ECO:0000269" key="12">
    <source>
    </source>
</evidence>
<evidence type="ECO:0000269" key="13">
    <source>
    </source>
</evidence>
<evidence type="ECO:0000303" key="14">
    <source>
    </source>
</evidence>
<evidence type="ECO:0000305" key="15"/>
<evidence type="ECO:0000312" key="16">
    <source>
        <dbReference type="EMBL" id="AAF63196.1"/>
    </source>
</evidence>
<evidence type="ECO:0007744" key="17">
    <source>
    </source>
</evidence>
<evidence type="ECO:0007829" key="18">
    <source>
        <dbReference type="PDB" id="1RH8"/>
    </source>
</evidence>
<feature type="chain" id="PRO_0000058252" description="Protein piccolo">
    <location>
        <begin position="1"/>
        <end position="5085"/>
    </location>
</feature>
<feature type="domain" description="PDZ" evidence="5 15">
    <location>
        <begin position="4442"/>
        <end position="4536"/>
    </location>
</feature>
<feature type="domain" description="C2 1" evidence="4">
    <location>
        <begin position="4639"/>
        <end position="4768"/>
    </location>
</feature>
<feature type="domain" description="C2 2" evidence="4">
    <location>
        <begin position="4950"/>
        <end position="5075"/>
    </location>
</feature>
<feature type="zinc finger region" description="C4-type" evidence="3 14">
    <location>
        <begin position="523"/>
        <end position="547"/>
    </location>
</feature>
<feature type="zinc finger region" description="C4-type" evidence="3 14">
    <location>
        <begin position="1010"/>
        <end position="1033"/>
    </location>
</feature>
<feature type="region of interest" description="Disordered" evidence="6">
    <location>
        <begin position="1"/>
        <end position="142"/>
    </location>
</feature>
<feature type="region of interest" description="Disordered" evidence="6">
    <location>
        <begin position="173"/>
        <end position="516"/>
    </location>
</feature>
<feature type="region of interest" description="12 X 10 AA tandem approximate repeats of P-A-K-P-Q-P-Q-Q-P-X">
    <location>
        <begin position="372"/>
        <end position="491"/>
    </location>
</feature>
<feature type="region of interest" description="Disordered" evidence="6">
    <location>
        <begin position="586"/>
        <end position="880"/>
    </location>
</feature>
<feature type="region of interest" description="Disordered" evidence="6">
    <location>
        <begin position="896"/>
        <end position="1012"/>
    </location>
</feature>
<feature type="region of interest" description="Disordered" evidence="6">
    <location>
        <begin position="1069"/>
        <end position="1357"/>
    </location>
</feature>
<feature type="region of interest" description="Disordered" evidence="6">
    <location>
        <begin position="1373"/>
        <end position="1604"/>
    </location>
</feature>
<feature type="region of interest" description="Disordered" evidence="6">
    <location>
        <begin position="1622"/>
        <end position="1815"/>
    </location>
</feature>
<feature type="region of interest" description="Disordered" evidence="6">
    <location>
        <begin position="2116"/>
        <end position="2139"/>
    </location>
</feature>
<feature type="region of interest" description="Disordered" evidence="6">
    <location>
        <begin position="2275"/>
        <end position="2385"/>
    </location>
</feature>
<feature type="region of interest" description="Disordered" evidence="6">
    <location>
        <begin position="2456"/>
        <end position="2486"/>
    </location>
</feature>
<feature type="region of interest" description="Disordered" evidence="6">
    <location>
        <begin position="3350"/>
        <end position="3457"/>
    </location>
</feature>
<feature type="region of interest" description="Disordered" evidence="6">
    <location>
        <begin position="3503"/>
        <end position="3572"/>
    </location>
</feature>
<feature type="region of interest" description="Disordered" evidence="6">
    <location>
        <begin position="3602"/>
        <end position="3695"/>
    </location>
</feature>
<feature type="region of interest" description="Disordered" evidence="6">
    <location>
        <begin position="3774"/>
        <end position="3816"/>
    </location>
</feature>
<feature type="region of interest" description="Disordered" evidence="6">
    <location>
        <begin position="4225"/>
        <end position="4248"/>
    </location>
</feature>
<feature type="region of interest" description="Disordered" evidence="6">
    <location>
        <begin position="4272"/>
        <end position="4291"/>
    </location>
</feature>
<feature type="region of interest" description="Disordered" evidence="6">
    <location>
        <begin position="4335"/>
        <end position="4357"/>
    </location>
</feature>
<feature type="region of interest" description="Disordered" evidence="6">
    <location>
        <begin position="4589"/>
        <end position="4638"/>
    </location>
</feature>
<feature type="region of interest" description="Disordered" evidence="6">
    <location>
        <begin position="4775"/>
        <end position="4851"/>
    </location>
</feature>
<feature type="region of interest" description="Disordered" evidence="6">
    <location>
        <begin position="4874"/>
        <end position="4908"/>
    </location>
</feature>
<feature type="compositionally biased region" description="Low complexity" evidence="6">
    <location>
        <begin position="1"/>
        <end position="20"/>
    </location>
</feature>
<feature type="compositionally biased region" description="Pro residues" evidence="6">
    <location>
        <begin position="92"/>
        <end position="101"/>
    </location>
</feature>
<feature type="compositionally biased region" description="Basic and acidic residues" evidence="6">
    <location>
        <begin position="110"/>
        <end position="121"/>
    </location>
</feature>
<feature type="compositionally biased region" description="Basic and acidic residues" evidence="6">
    <location>
        <begin position="132"/>
        <end position="142"/>
    </location>
</feature>
<feature type="compositionally biased region" description="Basic and acidic residues" evidence="6">
    <location>
        <begin position="184"/>
        <end position="198"/>
    </location>
</feature>
<feature type="compositionally biased region" description="Polar residues" evidence="6">
    <location>
        <begin position="227"/>
        <end position="240"/>
    </location>
</feature>
<feature type="compositionally biased region" description="Low complexity" evidence="6">
    <location>
        <begin position="253"/>
        <end position="268"/>
    </location>
</feature>
<feature type="compositionally biased region" description="Polar residues" evidence="6">
    <location>
        <begin position="275"/>
        <end position="285"/>
    </location>
</feature>
<feature type="compositionally biased region" description="Polar residues" evidence="6">
    <location>
        <begin position="318"/>
        <end position="332"/>
    </location>
</feature>
<feature type="compositionally biased region" description="Polar residues" evidence="6">
    <location>
        <begin position="375"/>
        <end position="391"/>
    </location>
</feature>
<feature type="compositionally biased region" description="Pro residues" evidence="6">
    <location>
        <begin position="392"/>
        <end position="408"/>
    </location>
</feature>
<feature type="compositionally biased region" description="Low complexity" evidence="6">
    <location>
        <begin position="409"/>
        <end position="423"/>
    </location>
</feature>
<feature type="compositionally biased region" description="Pro residues" evidence="6">
    <location>
        <begin position="424"/>
        <end position="472"/>
    </location>
</feature>
<feature type="compositionally biased region" description="Polar residues" evidence="6">
    <location>
        <begin position="486"/>
        <end position="499"/>
    </location>
</feature>
<feature type="compositionally biased region" description="Low complexity" evidence="6">
    <location>
        <begin position="596"/>
        <end position="613"/>
    </location>
</feature>
<feature type="compositionally biased region" description="Basic and acidic residues" evidence="6">
    <location>
        <begin position="618"/>
        <end position="654"/>
    </location>
</feature>
<feature type="compositionally biased region" description="Low complexity" evidence="6">
    <location>
        <begin position="672"/>
        <end position="682"/>
    </location>
</feature>
<feature type="compositionally biased region" description="Pro residues" evidence="6">
    <location>
        <begin position="683"/>
        <end position="693"/>
    </location>
</feature>
<feature type="compositionally biased region" description="Basic and acidic residues" evidence="6">
    <location>
        <begin position="705"/>
        <end position="717"/>
    </location>
</feature>
<feature type="compositionally biased region" description="Polar residues" evidence="6">
    <location>
        <begin position="718"/>
        <end position="767"/>
    </location>
</feature>
<feature type="compositionally biased region" description="Basic and acidic residues" evidence="6">
    <location>
        <begin position="790"/>
        <end position="808"/>
    </location>
</feature>
<feature type="compositionally biased region" description="Polar residues" evidence="6">
    <location>
        <begin position="867"/>
        <end position="878"/>
    </location>
</feature>
<feature type="compositionally biased region" description="Polar residues" evidence="6">
    <location>
        <begin position="896"/>
        <end position="906"/>
    </location>
</feature>
<feature type="compositionally biased region" description="Polar residues" evidence="6">
    <location>
        <begin position="917"/>
        <end position="936"/>
    </location>
</feature>
<feature type="compositionally biased region" description="Basic and acidic residues" evidence="6">
    <location>
        <begin position="990"/>
        <end position="1004"/>
    </location>
</feature>
<feature type="compositionally biased region" description="Pro residues" evidence="6">
    <location>
        <begin position="1077"/>
        <end position="1092"/>
    </location>
</feature>
<feature type="compositionally biased region" description="Basic and acidic residues" evidence="6">
    <location>
        <begin position="1110"/>
        <end position="1129"/>
    </location>
</feature>
<feature type="compositionally biased region" description="Basic and acidic residues" evidence="6">
    <location>
        <begin position="1141"/>
        <end position="1150"/>
    </location>
</feature>
<feature type="compositionally biased region" description="Basic and acidic residues" evidence="6">
    <location>
        <begin position="1157"/>
        <end position="1199"/>
    </location>
</feature>
<feature type="compositionally biased region" description="Basic and acidic residues" evidence="6">
    <location>
        <begin position="1274"/>
        <end position="1295"/>
    </location>
</feature>
<feature type="compositionally biased region" description="Polar residues" evidence="6">
    <location>
        <begin position="1300"/>
        <end position="1318"/>
    </location>
</feature>
<feature type="compositionally biased region" description="Basic and acidic residues" evidence="6">
    <location>
        <begin position="1331"/>
        <end position="1345"/>
    </location>
</feature>
<feature type="compositionally biased region" description="Low complexity" evidence="6">
    <location>
        <begin position="1346"/>
        <end position="1355"/>
    </location>
</feature>
<feature type="compositionally biased region" description="Basic and acidic residues" evidence="6">
    <location>
        <begin position="1378"/>
        <end position="1396"/>
    </location>
</feature>
<feature type="compositionally biased region" description="Polar residues" evidence="6">
    <location>
        <begin position="1397"/>
        <end position="1407"/>
    </location>
</feature>
<feature type="compositionally biased region" description="Basic and acidic residues" evidence="6">
    <location>
        <begin position="1417"/>
        <end position="1456"/>
    </location>
</feature>
<feature type="compositionally biased region" description="Acidic residues" evidence="6">
    <location>
        <begin position="1511"/>
        <end position="1523"/>
    </location>
</feature>
<feature type="compositionally biased region" description="Acidic residues" evidence="6">
    <location>
        <begin position="1578"/>
        <end position="1587"/>
    </location>
</feature>
<feature type="compositionally biased region" description="Basic and acidic residues" evidence="6">
    <location>
        <begin position="1588"/>
        <end position="1599"/>
    </location>
</feature>
<feature type="compositionally biased region" description="Polar residues" evidence="6">
    <location>
        <begin position="1622"/>
        <end position="1635"/>
    </location>
</feature>
<feature type="compositionally biased region" description="Acidic residues" evidence="6">
    <location>
        <begin position="1640"/>
        <end position="1650"/>
    </location>
</feature>
<feature type="compositionally biased region" description="Polar residues" evidence="6">
    <location>
        <begin position="1662"/>
        <end position="1679"/>
    </location>
</feature>
<feature type="compositionally biased region" description="Acidic residues" evidence="6">
    <location>
        <begin position="1719"/>
        <end position="1732"/>
    </location>
</feature>
<feature type="compositionally biased region" description="Basic and acidic residues" evidence="6">
    <location>
        <begin position="1733"/>
        <end position="1746"/>
    </location>
</feature>
<feature type="compositionally biased region" description="Basic and acidic residues" evidence="6">
    <location>
        <begin position="1787"/>
        <end position="1802"/>
    </location>
</feature>
<feature type="compositionally biased region" description="Low complexity" evidence="6">
    <location>
        <begin position="2121"/>
        <end position="2139"/>
    </location>
</feature>
<feature type="compositionally biased region" description="Pro residues" evidence="6">
    <location>
        <begin position="2350"/>
        <end position="2384"/>
    </location>
</feature>
<feature type="compositionally biased region" description="Basic and acidic residues" evidence="6">
    <location>
        <begin position="3377"/>
        <end position="3386"/>
    </location>
</feature>
<feature type="compositionally biased region" description="Acidic residues" evidence="6">
    <location>
        <begin position="3419"/>
        <end position="3428"/>
    </location>
</feature>
<feature type="compositionally biased region" description="Polar residues" evidence="6">
    <location>
        <begin position="3511"/>
        <end position="3523"/>
    </location>
</feature>
<feature type="compositionally biased region" description="Polar residues" evidence="6">
    <location>
        <begin position="3647"/>
        <end position="3663"/>
    </location>
</feature>
<feature type="compositionally biased region" description="Polar residues" evidence="6">
    <location>
        <begin position="3679"/>
        <end position="3691"/>
    </location>
</feature>
<feature type="compositionally biased region" description="Basic and acidic residues" evidence="6">
    <location>
        <begin position="3791"/>
        <end position="3803"/>
    </location>
</feature>
<feature type="compositionally biased region" description="Polar residues" evidence="6">
    <location>
        <begin position="3805"/>
        <end position="3816"/>
    </location>
</feature>
<feature type="compositionally biased region" description="Low complexity" evidence="6">
    <location>
        <begin position="4228"/>
        <end position="4248"/>
    </location>
</feature>
<feature type="compositionally biased region" description="Polar residues" evidence="6">
    <location>
        <begin position="4275"/>
        <end position="4291"/>
    </location>
</feature>
<feature type="compositionally biased region" description="Low complexity" evidence="6">
    <location>
        <begin position="4595"/>
        <end position="4618"/>
    </location>
</feature>
<feature type="compositionally biased region" description="Low complexity" evidence="6">
    <location>
        <begin position="4783"/>
        <end position="4795"/>
    </location>
</feature>
<feature type="compositionally biased region" description="Low complexity" evidence="6">
    <location>
        <begin position="4822"/>
        <end position="4832"/>
    </location>
</feature>
<feature type="compositionally biased region" description="Polar residues" evidence="6">
    <location>
        <begin position="4840"/>
        <end position="4851"/>
    </location>
</feature>
<feature type="compositionally biased region" description="Low complexity" evidence="6">
    <location>
        <begin position="4886"/>
        <end position="4908"/>
    </location>
</feature>
<feature type="binding site" evidence="4">
    <location>
        <position position="4668"/>
    </location>
    <ligand>
        <name>Ca(2+)</name>
        <dbReference type="ChEBI" id="CHEBI:29108"/>
        <label>1</label>
    </ligand>
</feature>
<feature type="binding site" evidence="4">
    <location>
        <position position="4668"/>
    </location>
    <ligand>
        <name>Ca(2+)</name>
        <dbReference type="ChEBI" id="CHEBI:29108"/>
        <label>2</label>
    </ligand>
</feature>
<feature type="binding site" evidence="4">
    <location>
        <position position="4674"/>
    </location>
    <ligand>
        <name>Ca(2+)</name>
        <dbReference type="ChEBI" id="CHEBI:29108"/>
        <label>1</label>
    </ligand>
</feature>
<feature type="binding site" evidence="4">
    <location>
        <position position="4738"/>
    </location>
    <ligand>
        <name>Ca(2+)</name>
        <dbReference type="ChEBI" id="CHEBI:29108"/>
        <label>1</label>
    </ligand>
</feature>
<feature type="binding site" evidence="4">
    <location>
        <position position="4738"/>
    </location>
    <ligand>
        <name>Ca(2+)</name>
        <dbReference type="ChEBI" id="CHEBI:29108"/>
        <label>2</label>
    </ligand>
</feature>
<feature type="binding site" evidence="4">
    <location>
        <position position="4740"/>
    </location>
    <ligand>
        <name>Ca(2+)</name>
        <dbReference type="ChEBI" id="CHEBI:29108"/>
        <label>1</label>
    </ligand>
</feature>
<feature type="binding site" evidence="4">
    <location>
        <position position="4740"/>
    </location>
    <ligand>
        <name>Ca(2+)</name>
        <dbReference type="ChEBI" id="CHEBI:29108"/>
        <label>2</label>
    </ligand>
</feature>
<feature type="binding site" evidence="4">
    <location>
        <position position="4740"/>
    </location>
    <ligand>
        <name>Ca(2+)</name>
        <dbReference type="ChEBI" id="CHEBI:29108"/>
        <label>3</label>
    </ligand>
</feature>
<feature type="binding site" evidence="4">
    <location>
        <position position="4743"/>
    </location>
    <ligand>
        <name>Ca(2+)</name>
        <dbReference type="ChEBI" id="CHEBI:29108"/>
        <label>3</label>
    </ligand>
</feature>
<feature type="binding site" evidence="4">
    <location>
        <position position="4746"/>
    </location>
    <ligand>
        <name>Ca(2+)</name>
        <dbReference type="ChEBI" id="CHEBI:29108"/>
        <label>2</label>
    </ligand>
</feature>
<feature type="binding site" evidence="4">
    <location>
        <position position="4746"/>
    </location>
    <ligand>
        <name>Ca(2+)</name>
        <dbReference type="ChEBI" id="CHEBI:29108"/>
        <label>3</label>
    </ligand>
</feature>
<feature type="modified residue" description="Phosphoserine" evidence="2">
    <location>
        <position position="211"/>
    </location>
</feature>
<feature type="modified residue" description="Phosphoserine" evidence="17">
    <location>
        <position position="231"/>
    </location>
</feature>
<feature type="modified residue" description="Phosphoserine" evidence="2">
    <location>
        <position position="857"/>
    </location>
</feature>
<feature type="modified residue" description="Phosphoserine" evidence="2">
    <location>
        <position position="869"/>
    </location>
</feature>
<feature type="modified residue" description="Phosphothreonine" evidence="2">
    <location>
        <position position="873"/>
    </location>
</feature>
<feature type="modified residue" description="Phosphothreonine" evidence="2">
    <location>
        <position position="1133"/>
    </location>
</feature>
<feature type="modified residue" description="Phosphoserine" evidence="17">
    <location>
        <position position="1304"/>
    </location>
</feature>
<feature type="modified residue" description="Phosphoserine" evidence="2">
    <location>
        <position position="1314"/>
    </location>
</feature>
<feature type="modified residue" description="Phosphoserine" evidence="2">
    <location>
        <position position="1315"/>
    </location>
</feature>
<feature type="modified residue" description="Phosphoserine" evidence="2">
    <location>
        <position position="1344"/>
    </location>
</feature>
<feature type="modified residue" description="Phosphoserine" evidence="17">
    <location>
        <position position="1346"/>
    </location>
</feature>
<feature type="modified residue" description="Phosphoserine" evidence="2">
    <location>
        <position position="1349"/>
    </location>
</feature>
<feature type="modified residue" description="Phosphoserine" evidence="2">
    <location>
        <position position="1350"/>
    </location>
</feature>
<feature type="modified residue" description="Phosphoserine" evidence="17">
    <location>
        <position position="1353"/>
    </location>
</feature>
<feature type="modified residue" description="Phosphoserine" evidence="17">
    <location>
        <position position="1451"/>
    </location>
</feature>
<feature type="modified residue" description="Phosphoserine" evidence="17">
    <location>
        <position position="1463"/>
    </location>
</feature>
<feature type="modified residue" description="Phosphoserine" evidence="17">
    <location>
        <position position="1464"/>
    </location>
</feature>
<feature type="modified residue" description="Phosphoserine" evidence="2">
    <location>
        <position position="1466"/>
    </location>
</feature>
<feature type="modified residue" description="Phosphoserine" evidence="17">
    <location>
        <position position="1469"/>
    </location>
</feature>
<feature type="modified residue" description="Phosphoserine" evidence="17">
    <location>
        <position position="1493"/>
    </location>
</feature>
<feature type="modified residue" description="Phosphoserine" evidence="17">
    <location>
        <position position="1496"/>
    </location>
</feature>
<feature type="modified residue" description="Phosphoserine" evidence="17">
    <location>
        <position position="1517"/>
    </location>
</feature>
<feature type="modified residue" description="Phosphoserine" evidence="17">
    <location>
        <position position="1519"/>
    </location>
</feature>
<feature type="modified residue" description="Phosphothreonine" evidence="2">
    <location>
        <position position="1564"/>
    </location>
</feature>
<feature type="modified residue" description="Phosphoserine" evidence="2">
    <location>
        <position position="1565"/>
    </location>
</feature>
<feature type="modified residue" description="Phosphoserine" evidence="2">
    <location>
        <position position="1575"/>
    </location>
</feature>
<feature type="modified residue" description="Phosphoserine" evidence="2">
    <location>
        <position position="1587"/>
    </location>
</feature>
<feature type="modified residue" description="Phosphoserine" evidence="17">
    <location>
        <position position="1650"/>
    </location>
</feature>
<feature type="modified residue" description="Phosphothreonine" evidence="17">
    <location>
        <position position="1652"/>
    </location>
</feature>
<feature type="modified residue" description="Phosphoserine" evidence="17">
    <location>
        <position position="1654"/>
    </location>
</feature>
<feature type="modified residue" description="Phosphoserine" evidence="2">
    <location>
        <position position="1659"/>
    </location>
</feature>
<feature type="modified residue" description="Phosphoserine" evidence="2">
    <location>
        <position position="1720"/>
    </location>
</feature>
<feature type="modified residue" description="Phosphoserine" evidence="17">
    <location>
        <position position="1721"/>
    </location>
</feature>
<feature type="modified residue" description="Phosphothreonine" evidence="2">
    <location>
        <position position="1772"/>
    </location>
</feature>
<feature type="modified residue" description="Phosphoserine" evidence="2">
    <location>
        <position position="1778"/>
    </location>
</feature>
<feature type="modified residue" description="Phosphoserine" evidence="2">
    <location>
        <position position="1807"/>
    </location>
</feature>
<feature type="modified residue" description="Phosphoserine" evidence="17">
    <location>
        <position position="1812"/>
    </location>
</feature>
<feature type="modified residue" description="Phosphoserine" evidence="17">
    <location>
        <position position="1820"/>
    </location>
</feature>
<feature type="modified residue" description="Phosphoserine" evidence="17">
    <location>
        <position position="1841"/>
    </location>
</feature>
<feature type="modified residue" description="Phosphoserine" evidence="2">
    <location>
        <position position="2511"/>
    </location>
</feature>
<feature type="modified residue" description="Phosphothreonine" evidence="2">
    <location>
        <position position="3014"/>
    </location>
</feature>
<feature type="modified residue" description="Phosphoserine" evidence="2">
    <location>
        <position position="3374"/>
    </location>
</feature>
<feature type="modified residue" description="Phosphoserine" evidence="2">
    <location>
        <position position="3388"/>
    </location>
</feature>
<feature type="modified residue" description="Phosphothreonine" evidence="17">
    <location>
        <position position="3392"/>
    </location>
</feature>
<feature type="modified residue" description="Phosphothreonine" evidence="17">
    <location>
        <position position="3419"/>
    </location>
</feature>
<feature type="modified residue" description="Phosphoserine" evidence="2">
    <location>
        <position position="3522"/>
    </location>
</feature>
<feature type="modified residue" description="Phosphoserine" evidence="2">
    <location>
        <position position="3530"/>
    </location>
</feature>
<feature type="modified residue" description="Phosphoserine" evidence="2">
    <location>
        <position position="3561"/>
    </location>
</feature>
<feature type="modified residue" description="Phosphoserine" evidence="2">
    <location>
        <position position="3565"/>
    </location>
</feature>
<feature type="modified residue" description="Phosphoserine" evidence="17">
    <location>
        <position position="3571"/>
    </location>
</feature>
<feature type="modified residue" description="Phosphoserine" evidence="17">
    <location>
        <position position="3574"/>
    </location>
</feature>
<feature type="modified residue" description="Phosphoserine" evidence="17">
    <location>
        <position position="3577"/>
    </location>
</feature>
<feature type="modified residue" description="Phosphoserine" evidence="17">
    <location>
        <position position="3598"/>
    </location>
</feature>
<feature type="modified residue" description="Phosphoserine" evidence="17">
    <location>
        <position position="3624"/>
    </location>
</feature>
<feature type="modified residue" description="Phosphoserine" evidence="17">
    <location>
        <position position="3626"/>
    </location>
</feature>
<feature type="modified residue" description="Phosphoserine" evidence="17">
    <location>
        <position position="3632"/>
    </location>
</feature>
<feature type="modified residue" description="Phosphoserine" evidence="17">
    <location>
        <position position="3781"/>
    </location>
</feature>
<feature type="modified residue" description="Phosphoserine" evidence="17">
    <location>
        <position position="4034"/>
    </location>
</feature>
<feature type="modified residue" description="Phosphoserine" evidence="17">
    <location>
        <position position="4150"/>
    </location>
</feature>
<feature type="modified residue" description="Phosphoserine" evidence="2">
    <location>
        <position position="4304"/>
    </location>
</feature>
<feature type="modified residue" description="Phosphoserine" evidence="2">
    <location>
        <position position="4308"/>
    </location>
</feature>
<feature type="modified residue" description="Phosphoserine" evidence="2">
    <location>
        <position position="4311"/>
    </location>
</feature>
<feature type="modified residue" description="Phosphoserine" evidence="17">
    <location>
        <position position="4340"/>
    </location>
</feature>
<feature type="modified residue" description="Phosphoserine" evidence="2">
    <location>
        <position position="4376"/>
    </location>
</feature>
<feature type="modified residue" description="Phosphoserine" evidence="2">
    <location>
        <position position="4609"/>
    </location>
</feature>
<feature type="modified residue" description="Phosphoserine" evidence="17">
    <location>
        <position position="4723"/>
    </location>
</feature>
<feature type="glycosylation site" description="O-linked (GlcNAc) threonine" evidence="1">
    <location>
        <position position="2702"/>
    </location>
</feature>
<feature type="glycosylation site" description="O-linked (GlcNAc) serine" evidence="1">
    <location>
        <position position="2976"/>
    </location>
</feature>
<feature type="splice variant" id="VSP_018194" description="In isoform 3." evidence="15">
    <location>
        <begin position="4687"/>
        <end position="4695"/>
    </location>
</feature>
<feature type="splice variant" id="VSP_003930" description="In isoform 2." evidence="14">
    <original>TKPTN</original>
    <variation>SKRRK</variation>
    <location>
        <begin position="4876"/>
        <end position="4880"/>
    </location>
</feature>
<feature type="splice variant" id="VSP_003931" description="In isoform 2." evidence="14">
    <location>
        <begin position="4881"/>
        <end position="5085"/>
    </location>
</feature>
<feature type="mutagenesis site" description="Complete loss of calcium-binding and calcium-dependent phospholipid binding activity." evidence="7">
    <original>D</original>
    <variation>A</variation>
    <location>
        <position position="4668"/>
    </location>
</feature>
<feature type="mutagenesis site" description="Complete loss of calcium-binding and calcium-dependent phospholipid binding activity." evidence="7">
    <original>D</original>
    <variation>A</variation>
    <location>
        <position position="4674"/>
    </location>
</feature>
<feature type="mutagenesis site" description="10-fold increase in affinity for calcium." evidence="7">
    <original>VM</original>
    <variation>SS</variation>
    <location>
        <begin position="4688"/>
        <end position="4689"/>
    </location>
</feature>
<feature type="mutagenesis site" description="Small increase in affinity for calcium." evidence="7">
    <original>V</original>
    <variation>S</variation>
    <location>
        <position position="4688"/>
    </location>
</feature>
<feature type="mutagenesis site" description="Increased affinity for calcium." evidence="7">
    <original>M</original>
    <variation>S</variation>
    <location>
        <position position="4689"/>
    </location>
</feature>
<feature type="mutagenesis site" description="10-fold increase in affinity for calcium." evidence="7">
    <original>VV</original>
    <variation>SS</variation>
    <location>
        <begin position="4690"/>
        <end position="4691"/>
    </location>
</feature>
<feature type="mutagenesis site" description="Moderate increase in affinity for calcium." evidence="7">
    <original>QN</original>
    <variation>AA</variation>
    <location>
        <begin position="4692"/>
        <end position="4693"/>
    </location>
</feature>
<feature type="mutagenesis site" description="No effect on calcium-binding activity." evidence="7">
    <original>A</original>
    <variation>S</variation>
    <location>
        <position position="4694"/>
    </location>
</feature>
<feature type="strand" evidence="18">
    <location>
        <begin position="4642"/>
        <end position="4650"/>
    </location>
</feature>
<feature type="strand" evidence="18">
    <location>
        <begin position="4653"/>
        <end position="4663"/>
    </location>
</feature>
<feature type="strand" evidence="18">
    <location>
        <begin position="4668"/>
        <end position="4671"/>
    </location>
</feature>
<feature type="strand" evidence="18">
    <location>
        <begin position="4676"/>
        <end position="4681"/>
    </location>
</feature>
<feature type="helix" evidence="18">
    <location>
        <begin position="4696"/>
        <end position="4699"/>
    </location>
</feature>
<feature type="turn" evidence="18">
    <location>
        <begin position="4700"/>
        <end position="4705"/>
    </location>
</feature>
<feature type="helix" evidence="18">
    <location>
        <begin position="4706"/>
        <end position="4709"/>
    </location>
</feature>
<feature type="strand" evidence="18">
    <location>
        <begin position="4712"/>
        <end position="4719"/>
    </location>
</feature>
<feature type="helix" evidence="18">
    <location>
        <begin position="4724"/>
        <end position="4727"/>
    </location>
</feature>
<feature type="strand" evidence="18">
    <location>
        <begin position="4731"/>
        <end position="4739"/>
    </location>
</feature>
<feature type="strand" evidence="18">
    <location>
        <begin position="4741"/>
        <end position="4743"/>
    </location>
</feature>
<feature type="strand" evidence="18">
    <location>
        <begin position="4745"/>
        <end position="4754"/>
    </location>
</feature>
<feature type="helix" evidence="18">
    <location>
        <begin position="4759"/>
        <end position="4761"/>
    </location>
</feature>
<feature type="strand" evidence="18">
    <location>
        <begin position="4766"/>
        <end position="4769"/>
    </location>
</feature>
<comment type="function">
    <text evidence="9 10 11 12 13">Scaffold protein of the presynaptic cytomatrix at the active zone (CAZ) which is the place in the synapse where neurotransmitter is released (PubMed:22875941). After synthesis, participates in the formation of Golgi-derived membranous organelles termed Piccolo-Bassoon transport vesicles (PTVs) that are transported along axons to sites of nascent synaptic contacts (PubMed:22875941). At the presynaptic active zone, regulates the spatial organization of synaptic vesicle cluster, the protein complexes that execute membrane fusion and compensatory endocytosis (PubMed:27907191). Organizes as well the readily releasable pool of synaptic vesicles and safeguards a fraction of them to be not immediately available for action potential-induced release (PubMed:29194628). Also functions in processes other than assembly such as the regulation of specific presynaptic protein ubiquitination by interacting with SIAH1 or the regulation of presynaptic autophagy (PubMed:23403927, PubMed:27907191). Also mediates synapse to nucleus communication leading to reconfiguration of gene expression by associating with the transcriptional corepressor CTBP1 and by subsequently reducing the size of its pool available for nuclear import (PubMed:25652077).</text>
</comment>
<comment type="cofactor">
    <cofactor evidence="4">
        <name>Ca(2+)</name>
        <dbReference type="ChEBI" id="CHEBI:29108"/>
    </cofactor>
    <text evidence="4">Binds 3 Ca(2+) ions per C2 domain.</text>
</comment>
<comment type="subunit">
    <text evidence="2 8 10 11 12">Interacts with BSN, ERC2/CAST1, RIMS1 and UNC13A (By similarity). Interacts (via C-terminus) with TRIO (via N-terminus) (PubMed:27907191). Interacts with CTBP1 (PubMed:25652077). Interacts with SIAH1; this interaction negatively regulates SIAH1 E3 ligase activity (PubMed:23403927). Directly interacts with GIT1 and GIT2 (PubMed:12473661).</text>
</comment>
<comment type="interaction">
    <interactant intactId="EBI-2271602">
        <id>Q9JKS6</id>
    </interactant>
    <interactant intactId="EBI-957514">
        <id>Q920M9</id>
        <label>Siah1</label>
    </interactant>
    <organismsDiffer>false</organismsDiffer>
    <experiments>2</experiments>
</comment>
<comment type="subcellular location">
    <subcellularLocation>
        <location evidence="2">Presynaptic active zone</location>
    </subcellularLocation>
    <text evidence="7">Colocalizes with BSN in developing axons.</text>
</comment>
<comment type="alternative products">
    <event type="alternative splicing"/>
    <isoform>
        <id>Q9JKS6-1</id>
        <name>1</name>
        <sequence type="displayed"/>
    </isoform>
    <isoform>
        <id>Q9JKS6-2</id>
        <name>2</name>
        <sequence type="described" ref="VSP_003930 VSP_003931"/>
    </isoform>
    <isoform>
        <id>Q9JKS6-3</id>
        <name>3</name>
        <sequence type="described" ref="VSP_018194"/>
    </isoform>
</comment>
<comment type="tissue specificity">
    <text evidence="8">Expressed in brain (at protein level).</text>
</comment>
<comment type="domain">
    <text evidence="7">C2 domain 1 is involved in binding calcium and phospholipids. Calcium binds with low affinity but with high specificity and induces a large conformational change.</text>
</comment>
<comment type="disruption phenotype">
    <text evidence="10">Loss of both Bassoon/BSN and Piccolo/PCLO leads to the aberrant degradation of multiple presynaptic proteins, culminating in synapse degeneration.</text>
</comment>
<dbReference type="EMBL" id="AF138789">
    <property type="protein sequence ID" value="AAF07822.2"/>
    <property type="molecule type" value="mRNA"/>
</dbReference>
<dbReference type="EMBL" id="AF227534">
    <property type="protein sequence ID" value="AAF63196.1"/>
    <property type="molecule type" value="mRNA"/>
</dbReference>
<dbReference type="RefSeq" id="NP_001104267.1">
    <property type="nucleotide sequence ID" value="NM_001110797.1"/>
</dbReference>
<dbReference type="RefSeq" id="NP_064483.1">
    <property type="nucleotide sequence ID" value="NM_020098.1"/>
</dbReference>
<dbReference type="PDB" id="1RH8">
    <property type="method" value="NMR"/>
    <property type="chains" value="A=4635-4776"/>
</dbReference>
<dbReference type="PDBsum" id="1RH8"/>
<dbReference type="SMR" id="Q9JKS6"/>
<dbReference type="BioGRID" id="248576">
    <property type="interactions" value="3"/>
</dbReference>
<dbReference type="FunCoup" id="Q9JKS6">
    <property type="interactions" value="2340"/>
</dbReference>
<dbReference type="IntAct" id="Q9JKS6">
    <property type="interactions" value="2"/>
</dbReference>
<dbReference type="MINT" id="Q9JKS6"/>
<dbReference type="STRING" id="10116.ENSRNOP00000007608"/>
<dbReference type="CarbonylDB" id="Q9JKS6"/>
<dbReference type="GlyCosmos" id="Q9JKS6">
    <property type="glycosylation" value="2 sites, No reported glycans"/>
</dbReference>
<dbReference type="GlyGen" id="Q9JKS6">
    <property type="glycosylation" value="17 sites, 1 O-linked glycan (1 site)"/>
</dbReference>
<dbReference type="iPTMnet" id="Q9JKS6"/>
<dbReference type="PhosphoSitePlus" id="Q9JKS6"/>
<dbReference type="PaxDb" id="10116-ENSRNOP00000008637"/>
<dbReference type="GeneID" id="56768"/>
<dbReference type="KEGG" id="rno:56768"/>
<dbReference type="AGR" id="RGD:69406"/>
<dbReference type="CTD" id="27445"/>
<dbReference type="RGD" id="69406">
    <property type="gene designation" value="Pclo"/>
</dbReference>
<dbReference type="eggNOG" id="KOG2060">
    <property type="taxonomic scope" value="Eukaryota"/>
</dbReference>
<dbReference type="InParanoid" id="Q9JKS6"/>
<dbReference type="PhylomeDB" id="Q9JKS6"/>
<dbReference type="EvolutionaryTrace" id="Q9JKS6"/>
<dbReference type="PRO" id="PR:Q9JKS6"/>
<dbReference type="Proteomes" id="UP000002494">
    <property type="component" value="Unplaced"/>
</dbReference>
<dbReference type="GO" id="GO:0030424">
    <property type="term" value="C:axon"/>
    <property type="evidence" value="ECO:0000314"/>
    <property type="project" value="RGD"/>
</dbReference>
<dbReference type="GO" id="GO:0044316">
    <property type="term" value="C:cone cell pedicle"/>
    <property type="evidence" value="ECO:0000314"/>
    <property type="project" value="RGD"/>
</dbReference>
<dbReference type="GO" id="GO:0048788">
    <property type="term" value="C:cytoskeleton of presynaptic active zone"/>
    <property type="evidence" value="ECO:0000314"/>
    <property type="project" value="RGD"/>
</dbReference>
<dbReference type="GO" id="GO:0030425">
    <property type="term" value="C:dendrite"/>
    <property type="evidence" value="ECO:0000314"/>
    <property type="project" value="RGD"/>
</dbReference>
<dbReference type="GO" id="GO:0098982">
    <property type="term" value="C:GABA-ergic synapse"/>
    <property type="evidence" value="ECO:0000318"/>
    <property type="project" value="GO_Central"/>
</dbReference>
<dbReference type="GO" id="GO:0098978">
    <property type="term" value="C:glutamatergic synapse"/>
    <property type="evidence" value="ECO:0000314"/>
    <property type="project" value="SynGO"/>
</dbReference>
<dbReference type="GO" id="GO:0005798">
    <property type="term" value="C:Golgi-associated vesicle"/>
    <property type="evidence" value="ECO:0000314"/>
    <property type="project" value="UniProtKB"/>
</dbReference>
<dbReference type="GO" id="GO:0030426">
    <property type="term" value="C:growth cone"/>
    <property type="evidence" value="ECO:0000314"/>
    <property type="project" value="RGD"/>
</dbReference>
<dbReference type="GO" id="GO:0060077">
    <property type="term" value="C:inhibitory synapse"/>
    <property type="evidence" value="ECO:0000314"/>
    <property type="project" value="RGD"/>
</dbReference>
<dbReference type="GO" id="GO:0031594">
    <property type="term" value="C:neuromuscular junction"/>
    <property type="evidence" value="ECO:0000314"/>
    <property type="project" value="RGD"/>
</dbReference>
<dbReference type="GO" id="GO:0043025">
    <property type="term" value="C:neuronal cell body"/>
    <property type="evidence" value="ECO:0000314"/>
    <property type="project" value="RGD"/>
</dbReference>
<dbReference type="GO" id="GO:0098688">
    <property type="term" value="C:parallel fiber to Purkinje cell synapse"/>
    <property type="evidence" value="ECO:0000314"/>
    <property type="project" value="SynGO"/>
</dbReference>
<dbReference type="GO" id="GO:0048471">
    <property type="term" value="C:perinuclear region of cytoplasm"/>
    <property type="evidence" value="ECO:0000314"/>
    <property type="project" value="RGD"/>
</dbReference>
<dbReference type="GO" id="GO:0014069">
    <property type="term" value="C:postsynaptic density"/>
    <property type="evidence" value="ECO:0000266"/>
    <property type="project" value="RGD"/>
</dbReference>
<dbReference type="GO" id="GO:0048786">
    <property type="term" value="C:presynaptic active zone"/>
    <property type="evidence" value="ECO:0000314"/>
    <property type="project" value="UniProtKB"/>
</dbReference>
<dbReference type="GO" id="GO:0098831">
    <property type="term" value="C:presynaptic active zone cytoplasmic component"/>
    <property type="evidence" value="ECO:0000314"/>
    <property type="project" value="SynGO"/>
</dbReference>
<dbReference type="GO" id="GO:0097470">
    <property type="term" value="C:ribbon synapse"/>
    <property type="evidence" value="ECO:0000314"/>
    <property type="project" value="RGD"/>
</dbReference>
<dbReference type="GO" id="GO:0044317">
    <property type="term" value="C:rod spherule"/>
    <property type="evidence" value="ECO:0000314"/>
    <property type="project" value="RGD"/>
</dbReference>
<dbReference type="GO" id="GO:0045202">
    <property type="term" value="C:synapse"/>
    <property type="evidence" value="ECO:0000314"/>
    <property type="project" value="UniProtKB"/>
</dbReference>
<dbReference type="GO" id="GO:0043195">
    <property type="term" value="C:terminal bouton"/>
    <property type="evidence" value="ECO:0000314"/>
    <property type="project" value="RGD"/>
</dbReference>
<dbReference type="GO" id="GO:0005802">
    <property type="term" value="C:trans-Golgi network"/>
    <property type="evidence" value="ECO:0000314"/>
    <property type="project" value="RGD"/>
</dbReference>
<dbReference type="GO" id="GO:0005509">
    <property type="term" value="F:calcium ion binding"/>
    <property type="evidence" value="ECO:0000314"/>
    <property type="project" value="UniProtKB"/>
</dbReference>
<dbReference type="GO" id="GO:0005544">
    <property type="term" value="F:calcium-dependent phospholipid binding"/>
    <property type="evidence" value="ECO:0000314"/>
    <property type="project" value="UniProtKB"/>
</dbReference>
<dbReference type="GO" id="GO:0005522">
    <property type="term" value="F:profilin binding"/>
    <property type="evidence" value="ECO:0000250"/>
    <property type="project" value="UniProtKB"/>
</dbReference>
<dbReference type="GO" id="GO:0098882">
    <property type="term" value="F:structural constituent of presynaptic active zone"/>
    <property type="evidence" value="ECO:0000266"/>
    <property type="project" value="RGD"/>
</dbReference>
<dbReference type="GO" id="GO:0001222">
    <property type="term" value="F:transcription corepressor binding"/>
    <property type="evidence" value="ECO:0000353"/>
    <property type="project" value="ParkinsonsUK-UCL"/>
</dbReference>
<dbReference type="GO" id="GO:0008270">
    <property type="term" value="F:zinc ion binding"/>
    <property type="evidence" value="ECO:0007669"/>
    <property type="project" value="UniProtKB-KW"/>
</dbReference>
<dbReference type="GO" id="GO:0007010">
    <property type="term" value="P:cytoskeleton organization"/>
    <property type="evidence" value="ECO:0000250"/>
    <property type="project" value="UniProtKB"/>
</dbReference>
<dbReference type="GO" id="GO:0030073">
    <property type="term" value="P:insulin secretion"/>
    <property type="evidence" value="ECO:0000266"/>
    <property type="project" value="RGD"/>
</dbReference>
<dbReference type="GO" id="GO:0098815">
    <property type="term" value="P:modulation of excitatory postsynaptic potential"/>
    <property type="evidence" value="ECO:0000315"/>
    <property type="project" value="RGD"/>
</dbReference>
<dbReference type="GO" id="GO:1903423">
    <property type="term" value="P:positive regulation of synaptic vesicle recycling"/>
    <property type="evidence" value="ECO:0000315"/>
    <property type="project" value="RGD"/>
</dbReference>
<dbReference type="GO" id="GO:0099140">
    <property type="term" value="P:presynaptic actin cytoskeleton organization"/>
    <property type="evidence" value="ECO:0000266"/>
    <property type="project" value="RGD"/>
</dbReference>
<dbReference type="GO" id="GO:1904071">
    <property type="term" value="P:presynaptic active zone assembly"/>
    <property type="evidence" value="ECO:0000314"/>
    <property type="project" value="UniProtKB"/>
</dbReference>
<dbReference type="GO" id="GO:0035418">
    <property type="term" value="P:protein localization to synapse"/>
    <property type="evidence" value="ECO:0000266"/>
    <property type="project" value="RGD"/>
</dbReference>
<dbReference type="GO" id="GO:0051036">
    <property type="term" value="P:regulation of endosome size"/>
    <property type="evidence" value="ECO:0000315"/>
    <property type="project" value="RGD"/>
</dbReference>
<dbReference type="GO" id="GO:0017157">
    <property type="term" value="P:regulation of exocytosis"/>
    <property type="evidence" value="ECO:0000266"/>
    <property type="project" value="RGD"/>
</dbReference>
<dbReference type="GO" id="GO:1904666">
    <property type="term" value="P:regulation of ubiquitin protein ligase activity"/>
    <property type="evidence" value="ECO:0000314"/>
    <property type="project" value="UniProtKB"/>
</dbReference>
<dbReference type="GO" id="GO:0050808">
    <property type="term" value="P:synapse organization"/>
    <property type="evidence" value="ECO:0000314"/>
    <property type="project" value="UniProtKB"/>
</dbReference>
<dbReference type="GO" id="GO:0097091">
    <property type="term" value="P:synaptic vesicle clustering"/>
    <property type="evidence" value="ECO:0000266"/>
    <property type="project" value="RGD"/>
</dbReference>
<dbReference type="GO" id="GO:0016080">
    <property type="term" value="P:synaptic vesicle targeting"/>
    <property type="evidence" value="ECO:0000303"/>
    <property type="project" value="UniProtKB"/>
</dbReference>
<dbReference type="CDD" id="cd04031">
    <property type="entry name" value="C2A_RIM1alpha"/>
    <property type="match status" value="1"/>
</dbReference>
<dbReference type="CDD" id="cd15774">
    <property type="entry name" value="FYVE1_PCLO"/>
    <property type="match status" value="1"/>
</dbReference>
<dbReference type="CDD" id="cd15776">
    <property type="entry name" value="FYVE2_PCLO"/>
    <property type="match status" value="1"/>
</dbReference>
<dbReference type="CDD" id="cd06714">
    <property type="entry name" value="PDZ_RIM-like"/>
    <property type="match status" value="1"/>
</dbReference>
<dbReference type="FunFam" id="3.30.40.10:FF:000326">
    <property type="entry name" value="Bassoon presynaptic cytomatrix protein"/>
    <property type="match status" value="1"/>
</dbReference>
<dbReference type="FunFam" id="2.60.40.150:FF:000137">
    <property type="entry name" value="Piccolo presynaptic cytomatrix protein"/>
    <property type="match status" value="1"/>
</dbReference>
<dbReference type="FunFam" id="2.60.40.150:FF:000149">
    <property type="entry name" value="Piccolo presynaptic cytomatrix protein"/>
    <property type="match status" value="1"/>
</dbReference>
<dbReference type="FunFam" id="3.30.40.10:FF:000563">
    <property type="entry name" value="Piccolo presynaptic cytomatrix protein"/>
    <property type="match status" value="1"/>
</dbReference>
<dbReference type="Gene3D" id="2.30.42.10">
    <property type="match status" value="1"/>
</dbReference>
<dbReference type="Gene3D" id="2.60.40.150">
    <property type="entry name" value="C2 domain"/>
    <property type="match status" value="2"/>
</dbReference>
<dbReference type="Gene3D" id="3.30.40.10">
    <property type="entry name" value="Zinc/RING finger domain, C3HC4 (zinc finger)"/>
    <property type="match status" value="2"/>
</dbReference>
<dbReference type="InterPro" id="IPR000008">
    <property type="entry name" value="C2_dom"/>
</dbReference>
<dbReference type="InterPro" id="IPR035892">
    <property type="entry name" value="C2_domain_sf"/>
</dbReference>
<dbReference type="InterPro" id="IPR042720">
    <property type="entry name" value="PCLO_FYVE1"/>
</dbReference>
<dbReference type="InterPro" id="IPR001478">
    <property type="entry name" value="PDZ"/>
</dbReference>
<dbReference type="InterPro" id="IPR036034">
    <property type="entry name" value="PDZ_sf"/>
</dbReference>
<dbReference type="InterPro" id="IPR052098">
    <property type="entry name" value="Presynaptic_Scaffold_Bsn/Pclo"/>
</dbReference>
<dbReference type="InterPro" id="IPR011011">
    <property type="entry name" value="Znf_FYVE_PHD"/>
</dbReference>
<dbReference type="InterPro" id="IPR008899">
    <property type="entry name" value="Znf_piccolo"/>
</dbReference>
<dbReference type="InterPro" id="IPR013083">
    <property type="entry name" value="Znf_RING/FYVE/PHD"/>
</dbReference>
<dbReference type="PANTHER" id="PTHR14113">
    <property type="entry name" value="PICCOLO/BASSOON"/>
    <property type="match status" value="1"/>
</dbReference>
<dbReference type="PANTHER" id="PTHR14113:SF6">
    <property type="entry name" value="PROTEIN PICCOLO"/>
    <property type="match status" value="1"/>
</dbReference>
<dbReference type="Pfam" id="PF00168">
    <property type="entry name" value="C2"/>
    <property type="match status" value="2"/>
</dbReference>
<dbReference type="Pfam" id="PF00595">
    <property type="entry name" value="PDZ"/>
    <property type="match status" value="1"/>
</dbReference>
<dbReference type="Pfam" id="PF05715">
    <property type="entry name" value="zf-piccolo"/>
    <property type="match status" value="2"/>
</dbReference>
<dbReference type="SMART" id="SM00239">
    <property type="entry name" value="C2"/>
    <property type="match status" value="2"/>
</dbReference>
<dbReference type="SMART" id="SM00228">
    <property type="entry name" value="PDZ"/>
    <property type="match status" value="1"/>
</dbReference>
<dbReference type="SUPFAM" id="SSF49562">
    <property type="entry name" value="C2 domain (Calcium/lipid-binding domain, CaLB)"/>
    <property type="match status" value="2"/>
</dbReference>
<dbReference type="SUPFAM" id="SSF57903">
    <property type="entry name" value="FYVE/PHD zinc finger"/>
    <property type="match status" value="2"/>
</dbReference>
<dbReference type="SUPFAM" id="SSF50156">
    <property type="entry name" value="PDZ domain-like"/>
    <property type="match status" value="1"/>
</dbReference>
<dbReference type="PROSITE" id="PS50004">
    <property type="entry name" value="C2"/>
    <property type="match status" value="2"/>
</dbReference>
<dbReference type="PROSITE" id="PS50106">
    <property type="entry name" value="PDZ"/>
    <property type="match status" value="1"/>
</dbReference>
<sequence length="5085" mass="552716">MGNEASLEGEGLPEGLAAAAGAGGSGSALHPGIPAGMEADLSQLSEEERRQIAAVMSRAQGLPKGSVPPAAAESPSMHRKQELDSSQAPQQPGKPPDPGRPTQPGLSKSRTTDTFRSEQKLPGRSPSTISLKESKSRTDFKEEYKSSMMPGFFSDVNPLSAVSSVVNKFNPFDLISDSEASQEETTKKQKVVQKEQGKSEGMAKPPLQQPSPKPIPKQQGQVKEVIQQDSSPKSVSSQQAEKVKPQAPGTGKPSQQSPAQTPAQQASPGKPVAQQPGSAKATVQQPGPAKSPAQPAGTGKSPAQPPAKTPGQQAGLEKTSSSQQPGPKSLAQTPGHGKFPLGPVKSPAQQPGTAKHPAQQPGPQTAAKVPGPTKTPAQQSGPGKTPAQQPGPTKPSPQQPIPAKPQPQQPVATKTQPQQSAPAKPQPQQPAPAKPQPQQPTPAKPQPQPPTPAKPQPQPPTATKPQPQPPTATKPHHQQPGLAKPSAQQPTKSISQTVTGRPLQPPPTSAAQTPAQGLSKTICPLCNTTELLLHIPEKANFNTCTECQSTVCSLCGFNPNPHLTEIKEWLCLNCQMQRALGGDLAAAIPSSPQPTPKAATAPTATASKSPVPSQQASPKKEPPSKQDSPKALESKKPPEPKKPPEPKKPPEPKKPPPLVKQPTLHGPTPATAPQLPVAEALPEPAPPKEPSGPLPEQAKAPVGDVEPKQPKMTETRADIQSSSTTKPDILSSQVQSQAQVKTASPLKTDSAKPSQSFPPTGEKTTPLDSKAMPRPASDSKIISQPGPGSESKDPKHIDPIQKKDEPKKAQPKGSPKPETKPVPKGSPTPSGTRPTAGQAAPPSQQPPKPQEQSRRFSLNLGGITDAPKSQPTTPQETVTGKLFGFGASIFSQASNLISTAGQQGPHPQTGPAAPSKQAPTPSQSPAAQGPAKSTGQLPPAPAKATAVKKEAKAAAAENLESKPEQAPTAKKTEKDKKPPPAKVGKPPPSEPEKAVPAHKPDKTTKPKPACPLCRTELNLGSQEPPNFNTCTECKNQVCNLCGFNPTPHLTEIQEWLCLNCQTQRAISGQLGDMGKMPPAPSGPKASPMPAPAEPSSQKTPTGTQVKGKKKEAEGKTEAEKPVPEKETASIEKTPPMVTTDQKLEESEGKKSKVSALPEKKPSEEEKAISADKKERKPPAEEKPPLEEKKPIPVDKKLPPEAKPLSSEGEEKHEILKAHVQIPEEEPTGKVAAKAGEEEQQPDSRPEALPGATPLTLPKAGEKERAVAQPQAEGSSKDGQGERSKEKTEKEEDKSDTSSSQQPKSPQGLSDTGYSSDGISGSLGEIPSLIPSDEKDLLKGLKKDSFSQESSPSSPSDLAKLESTVLSILEAQASTLVGEKAEKKTQPQKISPEKPQDQQKTQTASETLDITISEEEIKESQEKKVSPKKDSEQGFPSRKEHKEKPELVDDLSPRRASYDSVEDSSESENSPVVRRKRRTSIGSSSSDEYKQEDSQGSGEEEDFIRKQIIEMSADEDASGSEDEEFIRSQLKEISGVGESQKREEAKGKGKGVAGKHRRLTRKSSTSFDDDAGRRHSWHDEDDETFDESPELKFRETKSQESEELVVAGGGGLRRFKTIELNSTIADKYSSESSQKKTILYFDEEPELEMESLTDSPEDRSRGEGSSSLHASSFTPGTSPTSVSSLDEDSDSSPSHKKGESKQQRKARHRSHGPLLPTIEDSSEEEELREEEELLKEQEKQRELEQQQRKSSSKKSKKDKDELRAQRRRERPKTPPSNLSPIEDASPTEELRQAAEMEELHRSSCSEYSPSIESDPEGFEISPEKIIEVQKVYKLPAAVSLYSPTDEQSVMQKEGVQKALKSAEEMYEEMMQKPHKYKAFPAANERDEVFEKEPLYGGMLIEDYIYESLVEDTYNGSVDGSLLTRQEEQNGFMQQRGREQKVRLQEQIYDDPMQKISDLQKEFYELESLHSVVPQEDIVSSSYIIPESHEIVDLGSMVMSTSEEKKLLDADSAYEELMRRQQVQVTDGSSPVQTTIGDDMAESTLDFDRVQDASLTSSILSGASLTDSTSSATLSIPDVKITQQFSAEELEDEYVTDYTREIQDIIAHESLILTYSEPSESATSVPPSDTPSLTSSISSVCTTDSSSPVTTLDSLTTVYTEPADVMTKFKDSEEISSTYFPGSIIDYPEDISVSLDRTIMPESRTNEDRIVLSFSGMAPSVVESVGTKPERPQADTISTDLPISEKDLIKGKKETGDGIILEVLDAYKDKREESEAELTKISLPEPGLAQAPSSVTAPQIKEQHVSPHSVSGKISGQEKPTYRLPSGSLPVSTHPSKSRPFFRSSSLDISAQPPPPPPPPPPSPSTSSPPPTPPLPPATSPKPPTYPKKKLAVAATVTSTTIVTTHVDALTMVEAAAARRSNGLPATKMCAIAPPPVPPKPSQIPTGLVFTHRPEAIKPPIAPKPAVPQIPVTTQKPTDTCPKPTGLSLTSTMSLNLVTSADYNVPSPTSPLSPHSNKSSPRYSKSLMDTYVVITLPSEPGTPTDSSAAQAITSWPLGSPPKDLVSLETVFSVVPPMTSTEIPSASQPTLYTSGALGTFSVTPAVTASLFQTVPTSLTQFLPAEASKPEVSAVSSAVPSVAPRSVSIPIPPEPLALDRHQYKENGKLPLIGDAIDLRTIPKSEVKVTEKCMDLSASAMDVKRQTTANEVYRRQISAVQPSIINLSAASSLGTPVTMDSKTVAVVTCTDTTIYTTGTESQVGIEHAVTSPLQLTTSKHTELPYRKPSSQAFPTIRDEAPINLSLGPSAQAVTLAVTKPVTVPPVGVTNGWTDSTLSQGVADGEVVDLSTSKSHRTVVTMDESTSNVVTKIIEDDEKPVDLTAGRRAVCCDMVYTLPFGRSCTAQQPATTLPEDRFGYRDDHYQYDRSGPYGYRGIGGMKPSMSDTNLPEAGHFFYKSKNAFDYSGGTGAAVDLTSGRVSTGEVMDYSSKTTGPYPETRQVISGVGISTPQYSTARLTPPPGPQYGVGSVLRSSNGVVYSSVATPIPSTFAITTQPGSIFSTTVRDLSGIPTTDAMTSLSALHQSQPMPRSYFITTGASETDIAVTGIDINASLQTITMETLPAETMDSVPTLTTASEVFSEVVGEESTLLIVPDEDKQQQQLDLERELLELEKIKQQRFAEELEWERQEIQRFREQEKIMVQKKLEELQSMKQHLLYQQEEERQAQFMMRQETLAQQQLQLEQIQQLQQQLHQQLEEQKLRQIYQYNYDPSGTSSPQTTTEQAILEGQYAATEGSQFWATEDATTTASTVVAIEIPQSQGWYTVQSDGVTQYIAPPGILSTVSEIPLTDVVVKEEKQPKKRSSGAKVRGQYDEMGESVADDPRNLKKIVDSGVQTDDEETADRSYASRRRRTKKSVDTSVQTDDEDQDEWDMPSRSRRKARTGKYGDSTAEGDKTKPLSKVSSVAVQTVAEISVQTEPVGTIRTPSIRARVDAKVEIIKHISAPEKTYKGGSLGCQTETDSDTQSPPYLGATSPPKDKKRPTPLEIGYSSSHLRADPTVQLAPSPPKSPKVLYSPISPLSPGNALEPAFVPYEKPLPDDISPQKVLHPDMAKVPPASPKTAKMMQRSMSDPKPLSPTADESSRAPFQYSEGFTTKGSQTMTASGTQKKVKRTLPNPPPEEVSTGTQSTYSTMGTASRRRMCRTNTMARAKILQDIDRELDLVERESAKLRKKQAELDEEEKEIDAKLRYLEMGINRRKEALLKEREKRERAYLQGVAEDRDYMSDSEVSSTRPSRVESQHGVERPRTAPQTEFSQFIPPQTQTEAQLVPPTSPYTQYQYSSPALPTQAPTPYTQQSHFQQQTLYHQQVSPYQTQPTFQAVATMSFTPQAQPTPTPQPSYQLPSQMMVIQQKPRQTTLYLEPKITSNYEVIRNQPLMIAPVSTDNTYAVSHLGSKYNSLDLRIGLEERSSMAGSPISSISADSFYADIDHHTSRNYVLIDDIGDITKGTAALSTVFSLHEKDLSKTDRLLRTTETRRSQEVTDFLAPLQTSSRLHSYVKADEDPMEDPYELKLLKHQIKQEFRRGTESLDHLAGLSHYYHADTSYRHFPKSEKYSISRLTLEKQAAKQLPAAILYQKQSKHKKSLIDPKMSKFSPIQESRDLEPDYPTYMSSGTSSIGGISSRARLLQDDITFGLRKNITDQQKFMGSSLGSGLGTLGNTIRSALQDEADKPYSSGSRSRPSSRPSSVYGLDLSIKRDSSSSSLRLKAQEAEALDVSFGHSSSSARTKPTSLPISQSRGRIPIVAQSSEEESPLSPVGQPMGMARAAAGPLPPISADTRDQFGSSHSLPEVQQHMREESRTRGYDRDIAFIMDDFQHAMSDSEAYHLRREETDWFDKPRESRLENGHGLDRKLPERLVHSRPLSQHQEQILQMNGKTIHYIFPHARVKITRDFKDHTGSGNGLGIRIVGGKEIPGHSGEIGAYIAKILPGESAEHTGPLMEGMQVLEWNGVPLTSKTYEEVQSIINQQSGEAEICVRLDLNMLSDSENPQHLELHEPPKVDKAKSPGVDPKQLAAELQKVSLQQSPLVMSSVVEKGSHAHSGPTSAGSSSVPSPGQPGSPSVSKKKHSSTKPTDGPKAASHPITGEIQLQINYDLGNLIIHILQARNLVPRDNNGYSDPFVKVYLLPGRGQVMVVQNASAEYKRRTKYVQKSLNPEWNQTVIYKSISMEQLMKKTLEVTVWDYDRFSSNDFLGEVLIDLSSTSHLDNTPRWYPLKEQTESIDHGKSHSSQNSQQSPKPSVIKSRSHGIFPDPSKDMQVPTIEKSHSSPGSSKSSSEGHLRSHGPSRSQSKTSVAQTHLEDAGVAIAAAEAAVQQLRIQPTKPTNHRPAESSVSTGSSGSSVGSGYSVDSEGSSCVAGEPNLLPIPRIGKMGQNGQDPVKQPGMGATDTEGKTQVMGEIKLALKKEMKTDGEQLIVEILQCRNITYKFKSPDHLPDLYVKLYVINISTQKKVIKKKTRVCRHDREPSFNETFRFSLSPAGHSLQILLFSNGGKFMKKTLIGEACIWLDKVDLRKRIVNWHKLLVSPTQTH</sequence>
<name>PCLO_RAT</name>
<organism evidence="16">
    <name type="scientific">Rattus norvegicus</name>
    <name type="common">Rat</name>
    <dbReference type="NCBI Taxonomy" id="10116"/>
    <lineage>
        <taxon>Eukaryota</taxon>
        <taxon>Metazoa</taxon>
        <taxon>Chordata</taxon>
        <taxon>Craniata</taxon>
        <taxon>Vertebrata</taxon>
        <taxon>Euteleostomi</taxon>
        <taxon>Mammalia</taxon>
        <taxon>Eutheria</taxon>
        <taxon>Euarchontoglires</taxon>
        <taxon>Glires</taxon>
        <taxon>Rodentia</taxon>
        <taxon>Myomorpha</taxon>
        <taxon>Muroidea</taxon>
        <taxon>Muridae</taxon>
        <taxon>Murinae</taxon>
        <taxon>Rattus</taxon>
    </lineage>
</organism>
<gene>
    <name type="primary">Pclo</name>
</gene>
<reference evidence="15" key="1">
    <citation type="journal article" date="2000" name="Neuron">
        <title>Piccolo, a presynaptic zinc finger protein structurally related to bassoon.</title>
        <authorList>
            <person name="Fenster S.D."/>
            <person name="Chung W.J."/>
            <person name="Zhai R."/>
            <person name="Cases-Langhoff C."/>
            <person name="Voss B."/>
            <person name="Garner A.M."/>
            <person name="Kaempf U."/>
            <person name="Kindler S."/>
            <person name="Gundelfinger E.D."/>
            <person name="Garner C.C."/>
        </authorList>
    </citation>
    <scope>NUCLEOTIDE SEQUENCE [MRNA] (ISOFORM 2)</scope>
    <scope>INTERACTION WITH RABAC1</scope>
</reference>
<reference evidence="15" key="2">
    <citation type="submission" date="2000-01" db="EMBL/GenBank/DDBJ databases">
        <authorList>
            <person name="Fenster S.D."/>
            <person name="Cases-Langhoff C."/>
            <person name="Gundelfinger E.D."/>
            <person name="Garner C.C."/>
        </authorList>
    </citation>
    <scope>NUCLEOTIDE SEQUENCE [MRNA] (ISOFORM 1)</scope>
</reference>
<reference evidence="15" key="3">
    <citation type="journal article" date="2001" name="EMBO J.">
        <title>An unusual C(2)-domain in the active-zone protein piccolo: implications for Ca(2+) regulation of neurotransmitter release.</title>
        <authorList>
            <person name="Gerber S.H."/>
            <person name="Garcia J."/>
            <person name="Rizo J."/>
            <person name="Suedhof T.C."/>
        </authorList>
    </citation>
    <scope>CALCIUM-BINDING</scope>
    <scope>MUTAGENESIS OF ASP-4668; ASP-4674; VAL-4688; 4688-VAL-MET-4689; MET-4689; 4690-VAL-VAL-4691; 4692-GLN-ASN-4693 AND ALA-4694</scope>
</reference>
<reference key="4">
    <citation type="journal article" date="2003" name="J. Biol. Chem.">
        <title>The GIT family of proteins forms multimers and associates with the presynaptic cytomatrix protein Piccolo.</title>
        <authorList>
            <person name="Kim S."/>
            <person name="Ko J."/>
            <person name="Shin H."/>
            <person name="Lee J.R."/>
            <person name="Lim C."/>
            <person name="Han J.H."/>
            <person name="Altrock W.D."/>
            <person name="Garner C.C."/>
            <person name="Gundelfinger E.D."/>
            <person name="Premont R.T."/>
            <person name="Kaang B.K."/>
            <person name="Kim E."/>
        </authorList>
    </citation>
    <scope>INTERACTION WITH GIT1 AND GIT2</scope>
    <scope>TISSUE SPECIFICITY</scope>
</reference>
<reference key="5">
    <citation type="journal article" date="2012" name="Nat. Commun.">
        <title>Quantitative maps of protein phosphorylation sites across 14 different rat organs and tissues.</title>
        <authorList>
            <person name="Lundby A."/>
            <person name="Secher A."/>
            <person name="Lage K."/>
            <person name="Nordsborg N.B."/>
            <person name="Dmytriyev A."/>
            <person name="Lundby C."/>
            <person name="Olsen J.V."/>
        </authorList>
    </citation>
    <scope>PHOSPHORYLATION [LARGE SCALE ANALYSIS] AT SER-231; SER-1304; SER-1346; SER-1353; SER-1451; SER-1463; SER-1464; SER-1469; SER-1493; SER-1496; SER-1517; SER-1519; SER-1650; THR-1652; SER-1654; SER-1721; SER-1812; SER-1820; SER-1841; THR-3392; THR-3419; SER-3571; SER-3574; SER-3577; SER-3598; SER-3624; SER-3626; SER-3632; SER-3781; SER-4034; SER-4150; SER-4340 AND SER-4723</scope>
    <scope>IDENTIFICATION BY MASS SPECTROMETRY [LARGE SCALE ANALYSIS]</scope>
</reference>
<reference key="6">
    <citation type="journal article" date="2012" name="J. Neurosci.">
        <title>Formation of Golgi-derived active zone precursor vesicles.</title>
        <authorList>
            <person name="Maas C."/>
            <person name="Torres V.I."/>
            <person name="Altrock W.D."/>
            <person name="Leal-Ortiz S."/>
            <person name="Wagh D."/>
            <person name="Terry-Lorenzo R.T."/>
            <person name="Fejtova A."/>
            <person name="Gundelfinger E.D."/>
            <person name="Ziv N.E."/>
            <person name="Garner C.C."/>
        </authorList>
    </citation>
    <scope>FUNCTION</scope>
    <scope>SUBCELLULAR LOCATION</scope>
</reference>
<reference key="7">
    <citation type="journal article" date="2013" name="EMBO J.">
        <title>Bassoon and Piccolo maintain synapse integrity by regulating protein ubiquitination and degradation.</title>
        <authorList>
            <person name="Waites C.L."/>
            <person name="Leal-Ortiz S.A."/>
            <person name="Okerlund N."/>
            <person name="Dalke H."/>
            <person name="Fejtova A."/>
            <person name="Altrock W.D."/>
            <person name="Gundelfinger E.D."/>
            <person name="Garner C.C."/>
        </authorList>
    </citation>
    <scope>FUNCTION</scope>
    <scope>INTERACTION WITH SIAH1</scope>
    <scope>DISRUPTION PHENOTYPE</scope>
</reference>
<reference key="8">
    <citation type="journal article" date="2015" name="EMBO J.">
        <title>Synaptic activity controls localization and function of CtBP1 via binding to Bassoon and Piccolo.</title>
        <authorList>
            <person name="Ivanova D."/>
            <person name="Dirks A."/>
            <person name="Montenegro-Venegas C."/>
            <person name="Schoene C."/>
            <person name="Altrock W.D."/>
            <person name="Marini C."/>
            <person name="Frischknecht R."/>
            <person name="Schanze D."/>
            <person name="Zenker M."/>
            <person name="Gundelfinger E.D."/>
            <person name="Fejtova A."/>
        </authorList>
    </citation>
    <scope>FUNCTION</scope>
    <scope>INTERACTION WITH CTBP1</scope>
</reference>
<reference key="9">
    <citation type="journal article" date="2016" name="PLoS ONE">
        <title>Trio, a Rho Family GEF, Interacts with the Presynaptic Active Zone Proteins Piccolo and Bassoon.</title>
        <authorList>
            <person name="Terry-Lorenzo R.T."/>
            <person name="Torres V.I."/>
            <person name="Wagh D."/>
            <person name="Galaz J."/>
            <person name="Swanson S.K."/>
            <person name="Florens L."/>
            <person name="Washburn M.P."/>
            <person name="Waites C.L."/>
            <person name="Gundelfinger E.D."/>
            <person name="Reimer R.J."/>
            <person name="Garner C.C."/>
        </authorList>
    </citation>
    <scope>FUNCTION</scope>
    <scope>INTERACTION WITH TRIO</scope>
</reference>
<reference key="10">
    <citation type="journal article" date="2004" name="Nat. Struct. Mol. Biol.">
        <title>A conformational switch in the Piccolo C2A domain regulated by alternative splicing.</title>
        <authorList>
            <person name="Garcia J."/>
            <person name="Gerber S.H."/>
            <person name="Sugita S."/>
            <person name="Suedhof T.C."/>
            <person name="Rizo J."/>
        </authorList>
    </citation>
    <scope>STRUCTURE BY NMR OF 4635-4776</scope>
    <scope>ALTERNATIVE SPLICING (ISOFORM 3)</scope>
</reference>
<reference key="11">
    <citation type="journal article" date="2018" name="J. Physiol. (Lond.)">
        <title>The presynaptic scaffolding protein Piccolo organizes the readily releasable pool at the calyx of Held.</title>
        <authorList>
            <person name="Parthier D."/>
            <person name="Kuner T."/>
            <person name="Koerber C."/>
        </authorList>
    </citation>
    <scope>FUNCTION</scope>
</reference>